<name>DP2L_METLZ</name>
<organism>
    <name type="scientific">Methanocorpusculum labreanum (strain ATCC 43576 / DSM 4855 / Z)</name>
    <dbReference type="NCBI Taxonomy" id="410358"/>
    <lineage>
        <taxon>Archaea</taxon>
        <taxon>Methanobacteriati</taxon>
        <taxon>Methanobacteriota</taxon>
        <taxon>Stenosarchaea group</taxon>
        <taxon>Methanomicrobia</taxon>
        <taxon>Methanomicrobiales</taxon>
        <taxon>Methanocorpusculaceae</taxon>
        <taxon>Methanocorpusculum</taxon>
    </lineage>
</organism>
<dbReference type="EC" id="2.7.7.7" evidence="2"/>
<dbReference type="EC" id="3.1.11.1" evidence="2"/>
<dbReference type="EMBL" id="CP000559">
    <property type="protein sequence ID" value="ABN07860.1"/>
    <property type="molecule type" value="Genomic_DNA"/>
</dbReference>
<dbReference type="RefSeq" id="WP_011834063.1">
    <property type="nucleotide sequence ID" value="NC_008942.1"/>
</dbReference>
<dbReference type="SMR" id="A2SU54"/>
<dbReference type="STRING" id="410358.Mlab_1699"/>
<dbReference type="GeneID" id="4795011"/>
<dbReference type="KEGG" id="mla:Mlab_1699"/>
<dbReference type="eggNOG" id="arCOG04447">
    <property type="taxonomic scope" value="Archaea"/>
</dbReference>
<dbReference type="HOGENOM" id="CLU_001154_0_0_2"/>
<dbReference type="OrthoDB" id="7529at2157"/>
<dbReference type="Proteomes" id="UP000000365">
    <property type="component" value="Chromosome"/>
</dbReference>
<dbReference type="GO" id="GO:0003677">
    <property type="term" value="F:DNA binding"/>
    <property type="evidence" value="ECO:0007669"/>
    <property type="project" value="UniProtKB-UniRule"/>
</dbReference>
<dbReference type="GO" id="GO:0003887">
    <property type="term" value="F:DNA-directed DNA polymerase activity"/>
    <property type="evidence" value="ECO:0007669"/>
    <property type="project" value="UniProtKB-UniRule"/>
</dbReference>
<dbReference type="GO" id="GO:0008310">
    <property type="term" value="F:single-stranded DNA 3'-5' DNA exonuclease activity"/>
    <property type="evidence" value="ECO:0007669"/>
    <property type="project" value="UniProtKB-EC"/>
</dbReference>
<dbReference type="GO" id="GO:0006308">
    <property type="term" value="P:DNA catabolic process"/>
    <property type="evidence" value="ECO:0007669"/>
    <property type="project" value="UniProtKB-UniRule"/>
</dbReference>
<dbReference type="GO" id="GO:0006261">
    <property type="term" value="P:DNA-templated DNA replication"/>
    <property type="evidence" value="ECO:0007669"/>
    <property type="project" value="UniProtKB-UniRule"/>
</dbReference>
<dbReference type="HAMAP" id="MF_00324">
    <property type="entry name" value="DNApol_II_L_arch"/>
    <property type="match status" value="1"/>
</dbReference>
<dbReference type="InterPro" id="IPR004475">
    <property type="entry name" value="PolC_DP2"/>
</dbReference>
<dbReference type="InterPro" id="IPR056172">
    <property type="entry name" value="PolC_DP2_cat_dom"/>
</dbReference>
<dbReference type="InterPro" id="IPR056171">
    <property type="entry name" value="PolC_DP2_central_dom"/>
</dbReference>
<dbReference type="InterPro" id="IPR016033">
    <property type="entry name" value="PolC_DP2_N"/>
</dbReference>
<dbReference type="NCBIfam" id="TIGR00354">
    <property type="entry name" value="polC"/>
    <property type="match status" value="1"/>
</dbReference>
<dbReference type="NCBIfam" id="NF003103">
    <property type="entry name" value="PRK04023.1"/>
    <property type="match status" value="1"/>
</dbReference>
<dbReference type="PANTHER" id="PTHR42210">
    <property type="entry name" value="DNA POLYMERASE II LARGE SUBUNIT"/>
    <property type="match status" value="1"/>
</dbReference>
<dbReference type="PANTHER" id="PTHR42210:SF1">
    <property type="entry name" value="DNA POLYMERASE II LARGE SUBUNIT"/>
    <property type="match status" value="1"/>
</dbReference>
<dbReference type="Pfam" id="PF24846">
    <property type="entry name" value="PolC_DP2_cat"/>
    <property type="match status" value="1"/>
</dbReference>
<dbReference type="Pfam" id="PF24844">
    <property type="entry name" value="PolC_DP2_central"/>
    <property type="match status" value="1"/>
</dbReference>
<dbReference type="Pfam" id="PF03833">
    <property type="entry name" value="PolC_DP2_N"/>
    <property type="match status" value="1"/>
</dbReference>
<dbReference type="PIRSF" id="PIRSF016275">
    <property type="entry name" value="PolC_DP2"/>
    <property type="match status" value="1"/>
</dbReference>
<proteinExistence type="inferred from homology"/>
<reference key="1">
    <citation type="journal article" date="2009" name="Stand. Genomic Sci.">
        <title>Complete genome sequence of Methanocorpusculum labreanum type strain Z.</title>
        <authorList>
            <person name="Anderson I.J."/>
            <person name="Sieprawska-Lupa M."/>
            <person name="Goltsman E."/>
            <person name="Lapidus A."/>
            <person name="Copeland A."/>
            <person name="Glavina Del Rio T."/>
            <person name="Tice H."/>
            <person name="Dalin E."/>
            <person name="Barry K."/>
            <person name="Pitluck S."/>
            <person name="Hauser L."/>
            <person name="Land M."/>
            <person name="Lucas S."/>
            <person name="Richardson P."/>
            <person name="Whitman W.B."/>
            <person name="Kyrpides N.C."/>
        </authorList>
    </citation>
    <scope>NUCLEOTIDE SEQUENCE [LARGE SCALE GENOMIC DNA]</scope>
    <source>
        <strain>ATCC 43576 / DSM 4855 / Z</strain>
    </source>
</reference>
<gene>
    <name evidence="2" type="primary">polC</name>
    <name type="ordered locus">Mlab_1699</name>
</gene>
<evidence type="ECO:0000250" key="1"/>
<evidence type="ECO:0000255" key="2">
    <source>
        <dbReference type="HAMAP-Rule" id="MF_00324"/>
    </source>
</evidence>
<evidence type="ECO:0000256" key="3">
    <source>
        <dbReference type="SAM" id="MobiDB-lite"/>
    </source>
</evidence>
<protein>
    <recommendedName>
        <fullName evidence="2">DNA polymerase II large subunit</fullName>
        <shortName evidence="2">Pol II</shortName>
        <ecNumber evidence="2">2.7.7.7</ecNumber>
    </recommendedName>
    <alternativeName>
        <fullName evidence="2">Exodeoxyribonuclease large subunit</fullName>
        <ecNumber evidence="2">3.1.11.1</ecNumber>
    </alternativeName>
</protein>
<feature type="chain" id="PRO_0000294687" description="DNA polymerase II large subunit">
    <location>
        <begin position="1"/>
        <end position="1141"/>
    </location>
</feature>
<feature type="region of interest" description="Disordered" evidence="3">
    <location>
        <begin position="567"/>
        <end position="587"/>
    </location>
</feature>
<sequence length="1141" mass="126420">MAELVTSPAYRAYLDGLIAGLDRAMEIANKAKSLGVDPRPYVEIPIASDLAGRVEALLGYKGVAAKIRELEDRMSREEAALKIGDAFVGKEFGESTREDILDHAIRTSMALLTEGVVAAPTEGIGKVAVRRNDDGTEYLSIYYAGPIRSAGGTAQALSVLVGDYVRRLLNIDRYKPREEEIERYVEEIKQYNNIQSMQYLPKDDDIRLIIRNCPICIDGEPTEQEEISGYRNLERVETNVVRGGMGLVIAEGIGLKAPKIQKNVAKMNLDGWEWLEELISGNTPAQEVEEEPGVHPKDKYMRDMLAGRPSFSYPMRKGGFRFRLGRCRNTGLATCGFNPATLHILDDYLAVGTQMKVERPGKACGVVPCTDIEGPTVRLKSGELRRIDTLDDANKYYDQVEYILDIGEILISFGEFMENNHVLMPPSYCEEWWIQEGGPRHPKNEAEALSFVLEGAYLHPDYTWFWDDCSEGQLIFLSDKVAGTGSLREGVLYIPEDPAVKSVLEELLVPHTVEEGFYVVRTPLALIMGLGLTDTLAKSPTWKTLPPFSNGLSMAISLSGLKMRSKAGTRVGGRMGRPGKSAPRKMKPPVHVLFPIGESGGMKRSIDNAAKICSSDSEENFRGTSVTTGQVEGLIQVQTGERRCPKCGTVTFKSRCADCGTHTDAVYRCPHCNQLGEEGQESCPKCGANLVCSKESIVSLGQEYAAALKNVGMSASSSPELKGVRGLISRERVVEPLEKGLLRAKNNIFVFRDGTIRYDMIDLPLTHFRPAEVGVSVEKLRSIGYTQDMHGADLTDASQLVELHPQDIMVSVDCGEYLVRVAAYVDELLEKVYGMEAFYHVKTPEDLVGHLVMGLAPHTSAGVLARIVGFTKAKAGYAHPYYHAAKRRNCDGDEDCVMLLMDGLLNFSRSFLPSTRGGTMDAPLVLTTTLNPKEVDKETLNVDVMPRYPLEVYTACLTYRAPKEVGKFVDYVEKRVETPGQFEGFSFTHDTTDISEGPIDTMYTNPILKGTADKIKAELGLADRIRAVDTNDLAERIINSHLMPDMIGNLRSFSKQAFRCPKCKTSYRRIPVSGKCNKCGGPVKATMHKGNVTKYLEISKYMAEHYTLSDYTNQRIQVTEMNINSTFGEEEKVQMDLSDFF</sequence>
<comment type="function">
    <text evidence="1">Possesses two activities: a DNA synthesis (polymerase) and an exonucleolytic activity that degrades single-stranded DNA in the 3'- to 5'-direction. Has a template-primer preference which is characteristic of a replicative DNA polymerase (By similarity).</text>
</comment>
<comment type="catalytic activity">
    <reaction evidence="2">
        <text>DNA(n) + a 2'-deoxyribonucleoside 5'-triphosphate = DNA(n+1) + diphosphate</text>
        <dbReference type="Rhea" id="RHEA:22508"/>
        <dbReference type="Rhea" id="RHEA-COMP:17339"/>
        <dbReference type="Rhea" id="RHEA-COMP:17340"/>
        <dbReference type="ChEBI" id="CHEBI:33019"/>
        <dbReference type="ChEBI" id="CHEBI:61560"/>
        <dbReference type="ChEBI" id="CHEBI:173112"/>
        <dbReference type="EC" id="2.7.7.7"/>
    </reaction>
</comment>
<comment type="catalytic activity">
    <reaction evidence="2">
        <text>Exonucleolytic cleavage in the 3'- to 5'-direction to yield nucleoside 5'-phosphates.</text>
        <dbReference type="EC" id="3.1.11.1"/>
    </reaction>
</comment>
<comment type="subunit">
    <text evidence="2">Heterodimer of a large subunit and a small subunit.</text>
</comment>
<comment type="similarity">
    <text evidence="2">Belongs to the archaeal DNA polymerase II family.</text>
</comment>
<keyword id="KW-0235">DNA replication</keyword>
<keyword id="KW-0238">DNA-binding</keyword>
<keyword id="KW-0239">DNA-directed DNA polymerase</keyword>
<keyword id="KW-0269">Exonuclease</keyword>
<keyword id="KW-0378">Hydrolase</keyword>
<keyword id="KW-0511">Multifunctional enzyme</keyword>
<keyword id="KW-0540">Nuclease</keyword>
<keyword id="KW-0548">Nucleotidyltransferase</keyword>
<keyword id="KW-1185">Reference proteome</keyword>
<keyword id="KW-0808">Transferase</keyword>
<accession>A2SU54</accession>